<sequence length="150" mass="16522">MAEANLDPVFQIQRVYLKDVSLEQPNSPEILLNQEQPGVDIQLGVDAKPVADGMFEVTVTATVHTKIADKTVFLVEAKQAGIFEIRNMQTDQLGAILGIACPQIVYPYLRSNVADVIQRGGFPPVHMAEINFQAMYEQQQAEAATPQIIV</sequence>
<name>SECB_POLSJ</name>
<evidence type="ECO:0000255" key="1">
    <source>
        <dbReference type="HAMAP-Rule" id="MF_00821"/>
    </source>
</evidence>
<evidence type="ECO:0000305" key="2"/>
<feature type="chain" id="PRO_0000318256" description="Protein-export protein SecB">
    <location>
        <begin position="1"/>
        <end position="150"/>
    </location>
</feature>
<proteinExistence type="inferred from homology"/>
<keyword id="KW-0143">Chaperone</keyword>
<keyword id="KW-0963">Cytoplasm</keyword>
<keyword id="KW-0653">Protein transport</keyword>
<keyword id="KW-1185">Reference proteome</keyword>
<keyword id="KW-0811">Translocation</keyword>
<keyword id="KW-0813">Transport</keyword>
<accession>Q12F47</accession>
<gene>
    <name evidence="1" type="primary">secB</name>
    <name type="ordered locus">Bpro_0889</name>
</gene>
<protein>
    <recommendedName>
        <fullName evidence="1">Protein-export protein SecB</fullName>
    </recommendedName>
</protein>
<reference key="1">
    <citation type="journal article" date="2008" name="Appl. Environ. Microbiol.">
        <title>The genome of Polaromonas sp. strain JS666: insights into the evolution of a hydrocarbon- and xenobiotic-degrading bacterium, and features of relevance to biotechnology.</title>
        <authorList>
            <person name="Mattes T.E."/>
            <person name="Alexander A.K."/>
            <person name="Richardson P.M."/>
            <person name="Munk A.C."/>
            <person name="Han C.S."/>
            <person name="Stothard P."/>
            <person name="Coleman N.V."/>
        </authorList>
    </citation>
    <scope>NUCLEOTIDE SEQUENCE [LARGE SCALE GENOMIC DNA]</scope>
    <source>
        <strain>JS666 / ATCC BAA-500</strain>
    </source>
</reference>
<dbReference type="EMBL" id="CP000316">
    <property type="protein sequence ID" value="ABE42845.1"/>
    <property type="status" value="ALT_INIT"/>
    <property type="molecule type" value="Genomic_DNA"/>
</dbReference>
<dbReference type="RefSeq" id="WP_011481847.1">
    <property type="nucleotide sequence ID" value="NC_007948.1"/>
</dbReference>
<dbReference type="SMR" id="Q12F47"/>
<dbReference type="STRING" id="296591.Bpro_0889"/>
<dbReference type="KEGG" id="pol:Bpro_0889"/>
<dbReference type="eggNOG" id="COG1952">
    <property type="taxonomic scope" value="Bacteria"/>
</dbReference>
<dbReference type="HOGENOM" id="CLU_111574_1_0_4"/>
<dbReference type="OrthoDB" id="9795145at2"/>
<dbReference type="Proteomes" id="UP000001983">
    <property type="component" value="Chromosome"/>
</dbReference>
<dbReference type="GO" id="GO:0005737">
    <property type="term" value="C:cytoplasm"/>
    <property type="evidence" value="ECO:0007669"/>
    <property type="project" value="UniProtKB-SubCell"/>
</dbReference>
<dbReference type="GO" id="GO:0051082">
    <property type="term" value="F:unfolded protein binding"/>
    <property type="evidence" value="ECO:0007669"/>
    <property type="project" value="InterPro"/>
</dbReference>
<dbReference type="GO" id="GO:0006457">
    <property type="term" value="P:protein folding"/>
    <property type="evidence" value="ECO:0007669"/>
    <property type="project" value="UniProtKB-UniRule"/>
</dbReference>
<dbReference type="GO" id="GO:0051262">
    <property type="term" value="P:protein tetramerization"/>
    <property type="evidence" value="ECO:0007669"/>
    <property type="project" value="InterPro"/>
</dbReference>
<dbReference type="GO" id="GO:0015031">
    <property type="term" value="P:protein transport"/>
    <property type="evidence" value="ECO:0007669"/>
    <property type="project" value="UniProtKB-UniRule"/>
</dbReference>
<dbReference type="Gene3D" id="3.10.420.10">
    <property type="entry name" value="SecB-like"/>
    <property type="match status" value="1"/>
</dbReference>
<dbReference type="HAMAP" id="MF_00821">
    <property type="entry name" value="SecB"/>
    <property type="match status" value="1"/>
</dbReference>
<dbReference type="InterPro" id="IPR003708">
    <property type="entry name" value="SecB"/>
</dbReference>
<dbReference type="InterPro" id="IPR035958">
    <property type="entry name" value="SecB-like_sf"/>
</dbReference>
<dbReference type="NCBIfam" id="NF004394">
    <property type="entry name" value="PRK05751.1-5"/>
    <property type="match status" value="1"/>
</dbReference>
<dbReference type="NCBIfam" id="TIGR00809">
    <property type="entry name" value="secB"/>
    <property type="match status" value="1"/>
</dbReference>
<dbReference type="PANTHER" id="PTHR36918">
    <property type="match status" value="1"/>
</dbReference>
<dbReference type="PANTHER" id="PTHR36918:SF1">
    <property type="entry name" value="PROTEIN-EXPORT PROTEIN SECB"/>
    <property type="match status" value="1"/>
</dbReference>
<dbReference type="Pfam" id="PF02556">
    <property type="entry name" value="SecB"/>
    <property type="match status" value="1"/>
</dbReference>
<dbReference type="PRINTS" id="PR01594">
    <property type="entry name" value="SECBCHAPRONE"/>
</dbReference>
<dbReference type="SUPFAM" id="SSF54611">
    <property type="entry name" value="SecB-like"/>
    <property type="match status" value="1"/>
</dbReference>
<organism>
    <name type="scientific">Polaromonas sp. (strain JS666 / ATCC BAA-500)</name>
    <dbReference type="NCBI Taxonomy" id="296591"/>
    <lineage>
        <taxon>Bacteria</taxon>
        <taxon>Pseudomonadati</taxon>
        <taxon>Pseudomonadota</taxon>
        <taxon>Betaproteobacteria</taxon>
        <taxon>Burkholderiales</taxon>
        <taxon>Comamonadaceae</taxon>
        <taxon>Polaromonas</taxon>
    </lineage>
</organism>
<comment type="function">
    <text evidence="1">One of the proteins required for the normal export of preproteins out of the cell cytoplasm. It is a molecular chaperone that binds to a subset of precursor proteins, maintaining them in a translocation-competent state. It also specifically binds to its receptor SecA.</text>
</comment>
<comment type="subunit">
    <text evidence="1">Homotetramer, a dimer of dimers. One homotetramer interacts with 1 SecA dimer.</text>
</comment>
<comment type="subcellular location">
    <subcellularLocation>
        <location evidence="1">Cytoplasm</location>
    </subcellularLocation>
</comment>
<comment type="similarity">
    <text evidence="1">Belongs to the SecB family.</text>
</comment>
<comment type="sequence caution" evidence="2">
    <conflict type="erroneous initiation">
        <sequence resource="EMBL-CDS" id="ABE42845"/>
    </conflict>
</comment>